<evidence type="ECO:0000255" key="1">
    <source>
        <dbReference type="HAMAP-Rule" id="MF_01569"/>
    </source>
</evidence>
<evidence type="ECO:0000305" key="2"/>
<dbReference type="EC" id="6.1.1.15" evidence="1"/>
<dbReference type="EMBL" id="AE017354">
    <property type="protein sequence ID" value="AAU26783.1"/>
    <property type="status" value="ALT_INIT"/>
    <property type="molecule type" value="Genomic_DNA"/>
</dbReference>
<dbReference type="RefSeq" id="WP_010946431.1">
    <property type="nucleotide sequence ID" value="NC_002942.5"/>
</dbReference>
<dbReference type="RefSeq" id="YP_094730.2">
    <property type="nucleotide sequence ID" value="NC_002942.5"/>
</dbReference>
<dbReference type="SMR" id="Q5ZXN7"/>
<dbReference type="STRING" id="272624.lpg0694"/>
<dbReference type="PaxDb" id="272624-lpg0694"/>
<dbReference type="KEGG" id="lpn:lpg0694"/>
<dbReference type="PATRIC" id="fig|272624.6.peg.716"/>
<dbReference type="eggNOG" id="COG0442">
    <property type="taxonomic scope" value="Bacteria"/>
</dbReference>
<dbReference type="HOGENOM" id="CLU_016739_0_0_6"/>
<dbReference type="OrthoDB" id="9809052at2"/>
<dbReference type="Proteomes" id="UP000000609">
    <property type="component" value="Chromosome"/>
</dbReference>
<dbReference type="GO" id="GO:0005829">
    <property type="term" value="C:cytosol"/>
    <property type="evidence" value="ECO:0007669"/>
    <property type="project" value="TreeGrafter"/>
</dbReference>
<dbReference type="GO" id="GO:0002161">
    <property type="term" value="F:aminoacyl-tRNA deacylase activity"/>
    <property type="evidence" value="ECO:0007669"/>
    <property type="project" value="InterPro"/>
</dbReference>
<dbReference type="GO" id="GO:0005524">
    <property type="term" value="F:ATP binding"/>
    <property type="evidence" value="ECO:0007669"/>
    <property type="project" value="UniProtKB-UniRule"/>
</dbReference>
<dbReference type="GO" id="GO:0004827">
    <property type="term" value="F:proline-tRNA ligase activity"/>
    <property type="evidence" value="ECO:0007669"/>
    <property type="project" value="UniProtKB-UniRule"/>
</dbReference>
<dbReference type="GO" id="GO:0006433">
    <property type="term" value="P:prolyl-tRNA aminoacylation"/>
    <property type="evidence" value="ECO:0007669"/>
    <property type="project" value="UniProtKB-UniRule"/>
</dbReference>
<dbReference type="CDD" id="cd04334">
    <property type="entry name" value="ProRS-INS"/>
    <property type="match status" value="1"/>
</dbReference>
<dbReference type="CDD" id="cd00861">
    <property type="entry name" value="ProRS_anticodon_short"/>
    <property type="match status" value="1"/>
</dbReference>
<dbReference type="CDD" id="cd00779">
    <property type="entry name" value="ProRS_core_prok"/>
    <property type="match status" value="1"/>
</dbReference>
<dbReference type="FunFam" id="3.30.930.10:FF:000043">
    <property type="entry name" value="Proline--tRNA ligase"/>
    <property type="match status" value="1"/>
</dbReference>
<dbReference type="Gene3D" id="3.40.50.800">
    <property type="entry name" value="Anticodon-binding domain"/>
    <property type="match status" value="1"/>
</dbReference>
<dbReference type="Gene3D" id="3.30.930.10">
    <property type="entry name" value="Bira Bifunctional Protein, Domain 2"/>
    <property type="match status" value="2"/>
</dbReference>
<dbReference type="HAMAP" id="MF_01569">
    <property type="entry name" value="Pro_tRNA_synth_type1"/>
    <property type="match status" value="1"/>
</dbReference>
<dbReference type="InterPro" id="IPR002314">
    <property type="entry name" value="aa-tRNA-synt_IIb"/>
</dbReference>
<dbReference type="InterPro" id="IPR006195">
    <property type="entry name" value="aa-tRNA-synth_II"/>
</dbReference>
<dbReference type="InterPro" id="IPR045864">
    <property type="entry name" value="aa-tRNA-synth_II/BPL/LPL"/>
</dbReference>
<dbReference type="InterPro" id="IPR004154">
    <property type="entry name" value="Anticodon-bd"/>
</dbReference>
<dbReference type="InterPro" id="IPR036621">
    <property type="entry name" value="Anticodon-bd_dom_sf"/>
</dbReference>
<dbReference type="InterPro" id="IPR002316">
    <property type="entry name" value="Pro-tRNA-ligase_IIa"/>
</dbReference>
<dbReference type="InterPro" id="IPR004500">
    <property type="entry name" value="Pro-tRNA-synth_IIa_bac-type"/>
</dbReference>
<dbReference type="InterPro" id="IPR023717">
    <property type="entry name" value="Pro-tRNA-Synthase_IIa_type1"/>
</dbReference>
<dbReference type="InterPro" id="IPR050062">
    <property type="entry name" value="Pro-tRNA_synthetase"/>
</dbReference>
<dbReference type="InterPro" id="IPR044140">
    <property type="entry name" value="ProRS_anticodon_short"/>
</dbReference>
<dbReference type="InterPro" id="IPR033730">
    <property type="entry name" value="ProRS_core_prok"/>
</dbReference>
<dbReference type="InterPro" id="IPR036754">
    <property type="entry name" value="YbaK/aa-tRNA-synt-asso_dom_sf"/>
</dbReference>
<dbReference type="InterPro" id="IPR007214">
    <property type="entry name" value="YbaK/aa-tRNA-synth-assoc-dom"/>
</dbReference>
<dbReference type="NCBIfam" id="NF006625">
    <property type="entry name" value="PRK09194.1"/>
    <property type="match status" value="1"/>
</dbReference>
<dbReference type="NCBIfam" id="TIGR00409">
    <property type="entry name" value="proS_fam_II"/>
    <property type="match status" value="1"/>
</dbReference>
<dbReference type="PANTHER" id="PTHR42753">
    <property type="entry name" value="MITOCHONDRIAL RIBOSOME PROTEIN L39/PROLYL-TRNA LIGASE FAMILY MEMBER"/>
    <property type="match status" value="1"/>
</dbReference>
<dbReference type="PANTHER" id="PTHR42753:SF2">
    <property type="entry name" value="PROLINE--TRNA LIGASE"/>
    <property type="match status" value="1"/>
</dbReference>
<dbReference type="Pfam" id="PF03129">
    <property type="entry name" value="HGTP_anticodon"/>
    <property type="match status" value="1"/>
</dbReference>
<dbReference type="Pfam" id="PF00587">
    <property type="entry name" value="tRNA-synt_2b"/>
    <property type="match status" value="1"/>
</dbReference>
<dbReference type="Pfam" id="PF04073">
    <property type="entry name" value="tRNA_edit"/>
    <property type="match status" value="1"/>
</dbReference>
<dbReference type="PIRSF" id="PIRSF001535">
    <property type="entry name" value="ProRS_1"/>
    <property type="match status" value="1"/>
</dbReference>
<dbReference type="PRINTS" id="PR01046">
    <property type="entry name" value="TRNASYNTHPRO"/>
</dbReference>
<dbReference type="SUPFAM" id="SSF52954">
    <property type="entry name" value="Class II aaRS ABD-related"/>
    <property type="match status" value="1"/>
</dbReference>
<dbReference type="SUPFAM" id="SSF55681">
    <property type="entry name" value="Class II aaRS and biotin synthetases"/>
    <property type="match status" value="1"/>
</dbReference>
<dbReference type="SUPFAM" id="SSF55826">
    <property type="entry name" value="YbaK/ProRS associated domain"/>
    <property type="match status" value="1"/>
</dbReference>
<dbReference type="PROSITE" id="PS50862">
    <property type="entry name" value="AA_TRNA_LIGASE_II"/>
    <property type="match status" value="1"/>
</dbReference>
<proteinExistence type="inferred from homology"/>
<protein>
    <recommendedName>
        <fullName evidence="1">Proline--tRNA ligase</fullName>
        <ecNumber evidence="1">6.1.1.15</ecNumber>
    </recommendedName>
    <alternativeName>
        <fullName evidence="1">Prolyl-tRNA synthetase</fullName>
        <shortName evidence="1">ProRS</shortName>
    </alternativeName>
</protein>
<feature type="chain" id="PRO_0000248714" description="Proline--tRNA ligase">
    <location>
        <begin position="1"/>
        <end position="569"/>
    </location>
</feature>
<gene>
    <name evidence="1" type="primary">proS</name>
    <name type="ordered locus">lpg0694</name>
</gene>
<reference key="1">
    <citation type="journal article" date="2004" name="Science">
        <title>The genomic sequence of the accidental pathogen Legionella pneumophila.</title>
        <authorList>
            <person name="Chien M."/>
            <person name="Morozova I."/>
            <person name="Shi S."/>
            <person name="Sheng H."/>
            <person name="Chen J."/>
            <person name="Gomez S.M."/>
            <person name="Asamani G."/>
            <person name="Hill K."/>
            <person name="Nuara J."/>
            <person name="Feder M."/>
            <person name="Rineer J."/>
            <person name="Greenberg J.J."/>
            <person name="Steshenko V."/>
            <person name="Park S.H."/>
            <person name="Zhao B."/>
            <person name="Teplitskaya E."/>
            <person name="Edwards J.R."/>
            <person name="Pampou S."/>
            <person name="Georghiou A."/>
            <person name="Chou I.-C."/>
            <person name="Iannuccilli W."/>
            <person name="Ulz M.E."/>
            <person name="Kim D.H."/>
            <person name="Geringer-Sameth A."/>
            <person name="Goldsberry C."/>
            <person name="Morozov P."/>
            <person name="Fischer S.G."/>
            <person name="Segal G."/>
            <person name="Qu X."/>
            <person name="Rzhetsky A."/>
            <person name="Zhang P."/>
            <person name="Cayanis E."/>
            <person name="De Jong P.J."/>
            <person name="Ju J."/>
            <person name="Kalachikov S."/>
            <person name="Shuman H.A."/>
            <person name="Russo J.J."/>
        </authorList>
    </citation>
    <scope>NUCLEOTIDE SEQUENCE [LARGE SCALE GENOMIC DNA]</scope>
    <source>
        <strain>Philadelphia 1 / ATCC 33152 / DSM 7513</strain>
    </source>
</reference>
<keyword id="KW-0030">Aminoacyl-tRNA synthetase</keyword>
<keyword id="KW-0067">ATP-binding</keyword>
<keyword id="KW-0963">Cytoplasm</keyword>
<keyword id="KW-0436">Ligase</keyword>
<keyword id="KW-0547">Nucleotide-binding</keyword>
<keyword id="KW-0648">Protein biosynthesis</keyword>
<keyword id="KW-1185">Reference proteome</keyword>
<accession>Q5ZXN7</accession>
<sequence length="569" mass="64122">MRASQWFLVTQKETPNDAEIASHQLMLRSGMIRKLGSGLYTWMPLGLRVLRKVENIVREEMNKTHAMELLMPSVQPAELWQETGRWETFGGQLLTMKDSNQREYCFGPTHEEVITDIMRNELQSYKQLPVNFYQIQTKFRDEIRPRFGVMRAREFIMKDAYSFHLSLESLQETYKDMYQAYCRIFDRMGLKYRAVEADTGAIGGSASHEFQVLAESGEDLIFYSDASDYAANIEQATSLKPLKANQPCNETITLVDTPNQKTIDEVASFLGIASNQTIKTLIVKGKEHPMVALVLRGDDELNEVKAIKHPLVHAPLSFIDEELILKTLKTPLGSIGPIQLNIPVIVDHHALAMPSFVCGANQADKHFINAAWERDAKYDDAYDLRNVKEGDPSPDGKGTLHCCRGIEVGHVFQLGDKYAKAMNASVINEQGQLQTMIMGCYGLGITRVVAAAIEQHHDEHGIIWPQALAPFQVNIIPLNGARSQAVKEQAESLYQQLKSHGIDVLLDDRNERAGVLFADNDLIGIPHRLVVSERNLEQGCVEYKARISSETQLINLDKVVNFIIELINK</sequence>
<comment type="function">
    <text evidence="1">Catalyzes the attachment of proline to tRNA(Pro) in a two-step reaction: proline is first activated by ATP to form Pro-AMP and then transferred to the acceptor end of tRNA(Pro). As ProRS can inadvertently accommodate and process non-cognate amino acids such as alanine and cysteine, to avoid such errors it has two additional distinct editing activities against alanine. One activity is designated as 'pretransfer' editing and involves the tRNA(Pro)-independent hydrolysis of activated Ala-AMP. The other activity is designated 'posttransfer' editing and involves deacylation of mischarged Ala-tRNA(Pro). The misacylated Cys-tRNA(Pro) is not edited by ProRS.</text>
</comment>
<comment type="catalytic activity">
    <reaction evidence="1">
        <text>tRNA(Pro) + L-proline + ATP = L-prolyl-tRNA(Pro) + AMP + diphosphate</text>
        <dbReference type="Rhea" id="RHEA:14305"/>
        <dbReference type="Rhea" id="RHEA-COMP:9700"/>
        <dbReference type="Rhea" id="RHEA-COMP:9702"/>
        <dbReference type="ChEBI" id="CHEBI:30616"/>
        <dbReference type="ChEBI" id="CHEBI:33019"/>
        <dbReference type="ChEBI" id="CHEBI:60039"/>
        <dbReference type="ChEBI" id="CHEBI:78442"/>
        <dbReference type="ChEBI" id="CHEBI:78532"/>
        <dbReference type="ChEBI" id="CHEBI:456215"/>
        <dbReference type="EC" id="6.1.1.15"/>
    </reaction>
</comment>
<comment type="subunit">
    <text evidence="1">Homodimer.</text>
</comment>
<comment type="subcellular location">
    <subcellularLocation>
        <location evidence="1">Cytoplasm</location>
    </subcellularLocation>
</comment>
<comment type="domain">
    <text evidence="1">Consists of three domains: the N-terminal catalytic domain, the editing domain and the C-terminal anticodon-binding domain.</text>
</comment>
<comment type="similarity">
    <text evidence="1">Belongs to the class-II aminoacyl-tRNA synthetase family. ProS type 1 subfamily.</text>
</comment>
<comment type="sequence caution" evidence="2">
    <conflict type="erroneous initiation">
        <sequence resource="EMBL-CDS" id="AAU26783"/>
    </conflict>
</comment>
<name>SYP_LEGPH</name>
<organism>
    <name type="scientific">Legionella pneumophila subsp. pneumophila (strain Philadelphia 1 / ATCC 33152 / DSM 7513)</name>
    <dbReference type="NCBI Taxonomy" id="272624"/>
    <lineage>
        <taxon>Bacteria</taxon>
        <taxon>Pseudomonadati</taxon>
        <taxon>Pseudomonadota</taxon>
        <taxon>Gammaproteobacteria</taxon>
        <taxon>Legionellales</taxon>
        <taxon>Legionellaceae</taxon>
        <taxon>Legionella</taxon>
    </lineage>
</organism>